<reference key="1">
    <citation type="journal article" date="1998" name="Proc. Natl. Acad. Sci. U.S.A.">
        <title>WW domain-mediated interactions reveal a spliceosome-associated protein that binds a third class of proline-rich motif: the proline glycine and methionine-rich motif.</title>
        <authorList>
            <person name="Bedford M.T."/>
            <person name="Reed R."/>
            <person name="Leder P."/>
        </authorList>
    </citation>
    <scope>NUCLEOTIDE SEQUENCE [MRNA] (ISOFORM 1)</scope>
    <scope>FUNCTION</scope>
    <scope>SUBCELLULAR LOCATION</scope>
    <scope>INTERACTION WITH SNRPB; SNRPC; SF1 AND U2</scope>
</reference>
<reference key="2">
    <citation type="journal article" date="2004" name="Nat. Genet.">
        <title>Complete sequencing and characterization of 21,243 full-length human cDNAs.</title>
        <authorList>
            <person name="Ota T."/>
            <person name="Suzuki Y."/>
            <person name="Nishikawa T."/>
            <person name="Otsuki T."/>
            <person name="Sugiyama T."/>
            <person name="Irie R."/>
            <person name="Wakamatsu A."/>
            <person name="Hayashi K."/>
            <person name="Sato H."/>
            <person name="Nagai K."/>
            <person name="Kimura K."/>
            <person name="Makita H."/>
            <person name="Sekine M."/>
            <person name="Obayashi M."/>
            <person name="Nishi T."/>
            <person name="Shibahara T."/>
            <person name="Tanaka T."/>
            <person name="Ishii S."/>
            <person name="Yamamoto J."/>
            <person name="Saito K."/>
            <person name="Kawai Y."/>
            <person name="Isono Y."/>
            <person name="Nakamura Y."/>
            <person name="Nagahari K."/>
            <person name="Murakami K."/>
            <person name="Yasuda T."/>
            <person name="Iwayanagi T."/>
            <person name="Wagatsuma M."/>
            <person name="Shiratori A."/>
            <person name="Sudo H."/>
            <person name="Hosoiri T."/>
            <person name="Kaku Y."/>
            <person name="Kodaira H."/>
            <person name="Kondo H."/>
            <person name="Sugawara M."/>
            <person name="Takahashi M."/>
            <person name="Kanda K."/>
            <person name="Yokoi T."/>
            <person name="Furuya T."/>
            <person name="Kikkawa E."/>
            <person name="Omura Y."/>
            <person name="Abe K."/>
            <person name="Kamihara K."/>
            <person name="Katsuta N."/>
            <person name="Sato K."/>
            <person name="Tanikawa M."/>
            <person name="Yamazaki M."/>
            <person name="Ninomiya K."/>
            <person name="Ishibashi T."/>
            <person name="Yamashita H."/>
            <person name="Murakawa K."/>
            <person name="Fujimori K."/>
            <person name="Tanai H."/>
            <person name="Kimata M."/>
            <person name="Watanabe M."/>
            <person name="Hiraoka S."/>
            <person name="Chiba Y."/>
            <person name="Ishida S."/>
            <person name="Ono Y."/>
            <person name="Takiguchi S."/>
            <person name="Watanabe S."/>
            <person name="Yosida M."/>
            <person name="Hotuta T."/>
            <person name="Kusano J."/>
            <person name="Kanehori K."/>
            <person name="Takahashi-Fujii A."/>
            <person name="Hara H."/>
            <person name="Tanase T.-O."/>
            <person name="Nomura Y."/>
            <person name="Togiya S."/>
            <person name="Komai F."/>
            <person name="Hara R."/>
            <person name="Takeuchi K."/>
            <person name="Arita M."/>
            <person name="Imose N."/>
            <person name="Musashino K."/>
            <person name="Yuuki H."/>
            <person name="Oshima A."/>
            <person name="Sasaki N."/>
            <person name="Aotsuka S."/>
            <person name="Yoshikawa Y."/>
            <person name="Matsunawa H."/>
            <person name="Ichihara T."/>
            <person name="Shiohata N."/>
            <person name="Sano S."/>
            <person name="Moriya S."/>
            <person name="Momiyama H."/>
            <person name="Satoh N."/>
            <person name="Takami S."/>
            <person name="Terashima Y."/>
            <person name="Suzuki O."/>
            <person name="Nakagawa S."/>
            <person name="Senoh A."/>
            <person name="Mizoguchi H."/>
            <person name="Goto Y."/>
            <person name="Shimizu F."/>
            <person name="Wakebe H."/>
            <person name="Hishigaki H."/>
            <person name="Watanabe T."/>
            <person name="Sugiyama A."/>
            <person name="Takemoto M."/>
            <person name="Kawakami B."/>
            <person name="Yamazaki M."/>
            <person name="Watanabe K."/>
            <person name="Kumagai A."/>
            <person name="Itakura S."/>
            <person name="Fukuzumi Y."/>
            <person name="Fujimori Y."/>
            <person name="Komiyama M."/>
            <person name="Tashiro H."/>
            <person name="Tanigami A."/>
            <person name="Fujiwara T."/>
            <person name="Ono T."/>
            <person name="Yamada K."/>
            <person name="Fujii Y."/>
            <person name="Ozaki K."/>
            <person name="Hirao M."/>
            <person name="Ohmori Y."/>
            <person name="Kawabata A."/>
            <person name="Hikiji T."/>
            <person name="Kobatake N."/>
            <person name="Inagaki H."/>
            <person name="Ikema Y."/>
            <person name="Okamoto S."/>
            <person name="Okitani R."/>
            <person name="Kawakami T."/>
            <person name="Noguchi S."/>
            <person name="Itoh T."/>
            <person name="Shigeta K."/>
            <person name="Senba T."/>
            <person name="Matsumura K."/>
            <person name="Nakajima Y."/>
            <person name="Mizuno T."/>
            <person name="Morinaga M."/>
            <person name="Sasaki M."/>
            <person name="Togashi T."/>
            <person name="Oyama M."/>
            <person name="Hata H."/>
            <person name="Watanabe M."/>
            <person name="Komatsu T."/>
            <person name="Mizushima-Sugano J."/>
            <person name="Satoh T."/>
            <person name="Shirai Y."/>
            <person name="Takahashi Y."/>
            <person name="Nakagawa K."/>
            <person name="Okumura K."/>
            <person name="Nagase T."/>
            <person name="Nomura N."/>
            <person name="Kikuchi H."/>
            <person name="Masuho Y."/>
            <person name="Yamashita R."/>
            <person name="Nakai K."/>
            <person name="Yada T."/>
            <person name="Nakamura Y."/>
            <person name="Ohara O."/>
            <person name="Isogai T."/>
            <person name="Sugano S."/>
        </authorList>
    </citation>
    <scope>NUCLEOTIDE SEQUENCE [LARGE SCALE MRNA] (ISOFORM 2)</scope>
    <source>
        <tissue>Brain</tissue>
    </source>
</reference>
<reference key="3">
    <citation type="journal article" date="2004" name="Nature">
        <title>The DNA sequence and analysis of human chromosome 13.</title>
        <authorList>
            <person name="Dunham A."/>
            <person name="Matthews L.H."/>
            <person name="Burton J."/>
            <person name="Ashurst J.L."/>
            <person name="Howe K.L."/>
            <person name="Ashcroft K.J."/>
            <person name="Beare D.M."/>
            <person name="Burford D.C."/>
            <person name="Hunt S.E."/>
            <person name="Griffiths-Jones S."/>
            <person name="Jones M.C."/>
            <person name="Keenan S.J."/>
            <person name="Oliver K."/>
            <person name="Scott C.E."/>
            <person name="Ainscough R."/>
            <person name="Almeida J.P."/>
            <person name="Ambrose K.D."/>
            <person name="Andrews D.T."/>
            <person name="Ashwell R.I.S."/>
            <person name="Babbage A.K."/>
            <person name="Bagguley C.L."/>
            <person name="Bailey J."/>
            <person name="Bannerjee R."/>
            <person name="Barlow K.F."/>
            <person name="Bates K."/>
            <person name="Beasley H."/>
            <person name="Bird C.P."/>
            <person name="Bray-Allen S."/>
            <person name="Brown A.J."/>
            <person name="Brown J.Y."/>
            <person name="Burrill W."/>
            <person name="Carder C."/>
            <person name="Carter N.P."/>
            <person name="Chapman J.C."/>
            <person name="Clamp M.E."/>
            <person name="Clark S.Y."/>
            <person name="Clarke G."/>
            <person name="Clee C.M."/>
            <person name="Clegg S.C."/>
            <person name="Cobley V."/>
            <person name="Collins J.E."/>
            <person name="Corby N."/>
            <person name="Coville G.J."/>
            <person name="Deloukas P."/>
            <person name="Dhami P."/>
            <person name="Dunham I."/>
            <person name="Dunn M."/>
            <person name="Earthrowl M.E."/>
            <person name="Ellington A.G."/>
            <person name="Faulkner L."/>
            <person name="Frankish A.G."/>
            <person name="Frankland J."/>
            <person name="French L."/>
            <person name="Garner P."/>
            <person name="Garnett J."/>
            <person name="Gilbert J.G.R."/>
            <person name="Gilson C.J."/>
            <person name="Ghori J."/>
            <person name="Grafham D.V."/>
            <person name="Gribble S.M."/>
            <person name="Griffiths C."/>
            <person name="Hall R.E."/>
            <person name="Hammond S."/>
            <person name="Harley J.L."/>
            <person name="Hart E.A."/>
            <person name="Heath P.D."/>
            <person name="Howden P.J."/>
            <person name="Huckle E.J."/>
            <person name="Hunt P.J."/>
            <person name="Hunt A.R."/>
            <person name="Johnson C."/>
            <person name="Johnson D."/>
            <person name="Kay M."/>
            <person name="Kimberley A.M."/>
            <person name="King A."/>
            <person name="Laird G.K."/>
            <person name="Langford C.J."/>
            <person name="Lawlor S."/>
            <person name="Leongamornlert D.A."/>
            <person name="Lloyd D.M."/>
            <person name="Lloyd C."/>
            <person name="Loveland J.E."/>
            <person name="Lovell J."/>
            <person name="Martin S."/>
            <person name="Mashreghi-Mohammadi M."/>
            <person name="McLaren S.J."/>
            <person name="McMurray A."/>
            <person name="Milne S."/>
            <person name="Moore M.J.F."/>
            <person name="Nickerson T."/>
            <person name="Palmer S.A."/>
            <person name="Pearce A.V."/>
            <person name="Peck A.I."/>
            <person name="Pelan S."/>
            <person name="Phillimore B."/>
            <person name="Porter K.M."/>
            <person name="Rice C.M."/>
            <person name="Searle S."/>
            <person name="Sehra H.K."/>
            <person name="Shownkeen R."/>
            <person name="Skuce C.D."/>
            <person name="Smith M."/>
            <person name="Steward C.A."/>
            <person name="Sycamore N."/>
            <person name="Tester J."/>
            <person name="Thomas D.W."/>
            <person name="Tracey A."/>
            <person name="Tromans A."/>
            <person name="Tubby B."/>
            <person name="Wall M."/>
            <person name="Wallis J.M."/>
            <person name="West A.P."/>
            <person name="Whitehead S.L."/>
            <person name="Willey D.L."/>
            <person name="Wilming L."/>
            <person name="Wray P.W."/>
            <person name="Wright M.W."/>
            <person name="Young L."/>
            <person name="Coulson A."/>
            <person name="Durbin R.M."/>
            <person name="Hubbard T."/>
            <person name="Sulston J.E."/>
            <person name="Beck S."/>
            <person name="Bentley D.R."/>
            <person name="Rogers J."/>
            <person name="Ross M.T."/>
        </authorList>
    </citation>
    <scope>NUCLEOTIDE SEQUENCE [LARGE SCALE GENOMIC DNA]</scope>
</reference>
<reference key="4">
    <citation type="journal article" date="2004" name="Genome Res.">
        <title>The status, quality, and expansion of the NIH full-length cDNA project: the Mammalian Gene Collection (MGC).</title>
        <authorList>
            <consortium name="The MGC Project Team"/>
        </authorList>
    </citation>
    <scope>NUCLEOTIDE SEQUENCE [LARGE SCALE MRNA] (ISOFORM 1)</scope>
    <source>
        <tissue>Brain</tissue>
        <tissue>Testis</tissue>
    </source>
</reference>
<reference key="5">
    <citation type="journal article" date="2010" name="Sci. Signal.">
        <title>Quantitative phosphoproteomics reveals widespread full phosphorylation site occupancy during mitosis.</title>
        <authorList>
            <person name="Olsen J.V."/>
            <person name="Vermeulen M."/>
            <person name="Santamaria A."/>
            <person name="Kumar C."/>
            <person name="Miller M.L."/>
            <person name="Jensen L.J."/>
            <person name="Gnad F."/>
            <person name="Cox J."/>
            <person name="Jensen T.S."/>
            <person name="Nigg E.A."/>
            <person name="Brunak S."/>
            <person name="Mann M."/>
        </authorList>
    </citation>
    <scope>PHOSPHORYLATION [LARGE SCALE ANALYSIS] AT SER-220</scope>
    <scope>IDENTIFICATION BY MASS SPECTROMETRY [LARGE SCALE ANALYSIS]</scope>
    <source>
        <tissue>Cervix carcinoma</tissue>
    </source>
</reference>
<reference key="6">
    <citation type="journal article" date="2011" name="Sci. Signal.">
        <title>System-wide temporal characterization of the proteome and phosphoproteome of human embryonic stem cell differentiation.</title>
        <authorList>
            <person name="Rigbolt K.T."/>
            <person name="Prokhorova T.A."/>
            <person name="Akimov V."/>
            <person name="Henningsen J."/>
            <person name="Johansen P.T."/>
            <person name="Kratchmarova I."/>
            <person name="Kassem M."/>
            <person name="Mann M."/>
            <person name="Olsen J.V."/>
            <person name="Blagoev B."/>
        </authorList>
    </citation>
    <scope>PHOSPHORYLATION [LARGE SCALE ANALYSIS] AT SER-220 AND SER-262</scope>
    <scope>IDENTIFICATION BY MASS SPECTROMETRY [LARGE SCALE ANALYSIS]</scope>
</reference>
<reference key="7">
    <citation type="journal article" date="2013" name="J. Proteome Res.">
        <title>Toward a comprehensive characterization of a human cancer cell phosphoproteome.</title>
        <authorList>
            <person name="Zhou H."/>
            <person name="Di Palma S."/>
            <person name="Preisinger C."/>
            <person name="Peng M."/>
            <person name="Polat A.N."/>
            <person name="Heck A.J."/>
            <person name="Mohammed S."/>
        </authorList>
    </citation>
    <scope>PHOSPHORYLATION [LARGE SCALE ANALYSIS] AT SER-227 AND SER-229</scope>
    <scope>IDENTIFICATION BY MASS SPECTROMETRY [LARGE SCALE ANALYSIS]</scope>
    <source>
        <tissue>Cervix carcinoma</tissue>
    </source>
</reference>
<reference key="8">
    <citation type="journal article" date="2014" name="J. Proteomics">
        <title>An enzyme assisted RP-RPLC approach for in-depth analysis of human liver phosphoproteome.</title>
        <authorList>
            <person name="Bian Y."/>
            <person name="Song C."/>
            <person name="Cheng K."/>
            <person name="Dong M."/>
            <person name="Wang F."/>
            <person name="Huang J."/>
            <person name="Sun D."/>
            <person name="Wang L."/>
            <person name="Ye M."/>
            <person name="Zou H."/>
        </authorList>
    </citation>
    <scope>PHOSPHORYLATION [LARGE SCALE ANALYSIS] AT SER-262</scope>
    <scope>IDENTIFICATION BY MASS SPECTROMETRY [LARGE SCALE ANALYSIS]</scope>
    <source>
        <tissue>Liver</tissue>
    </source>
</reference>
<reference key="9">
    <citation type="submission" date="2006-10" db="PDB data bank">
        <title>Solution structure of WW domain in WW domain binding protein 4 (WBP-4).</title>
        <authorList>
            <consortium name="RIKEN structural genomics initiative (RSGI)"/>
        </authorList>
    </citation>
    <scope>STRUCTURE BY NMR OF 124-164</scope>
</reference>
<reference key="10">
    <citation type="journal article" date="2009" name="J. Biol. Chem.">
        <title>Structure and function of the two tandem WW domains of the pre-mRNA splicing factor FBP21 (formin-binding protein 21).</title>
        <authorList>
            <person name="Huang X."/>
            <person name="Beullens M."/>
            <person name="Zhang J."/>
            <person name="Zhou Y."/>
            <person name="Nicolaescu E."/>
            <person name="Lesage B."/>
            <person name="Hu Q."/>
            <person name="Wu J."/>
            <person name="Bollen M."/>
            <person name="Shi Y."/>
        </authorList>
    </citation>
    <scope>STRUCTURE BY NMR OF 122-196</scope>
    <scope>FUNCTION</scope>
    <scope>MUTAGENESIS OF TRP-150 AND TRP-191</scope>
    <scope>SUBCELLULAR LOCATION</scope>
    <scope>INTERACTION WITH WBP11</scope>
</reference>
<reference evidence="14" key="11">
    <citation type="journal article" date="2017" name="Cell">
        <title>Cryo-EM Structure of a Pre-catalytic Human Spliceosome Primed for Activation.</title>
        <authorList>
            <person name="Bertram K."/>
            <person name="Agafonov D.E."/>
            <person name="Dybkov O."/>
            <person name="Haselbach D."/>
            <person name="Leelaram M.N."/>
            <person name="Will C.L."/>
            <person name="Urlaub H."/>
            <person name="Kastner B."/>
            <person name="Luhrmann R."/>
            <person name="Stark H."/>
        </authorList>
    </citation>
    <scope>STRUCTURE BY ELECTRON MICROSCOPY (4.50 ANGSTROMS)</scope>
    <scope>FUNCTION</scope>
    <scope>SUBUNIT</scope>
    <scope>SUBCELLULAR LOCATION</scope>
    <scope>IDENTIFICATION BY MASS SPECTROMETRY</scope>
</reference>
<reference evidence="15" key="12">
    <citation type="journal article" date="2022" name="Nat. Commun.">
        <title>A multi-factor trafficking site on the spliceosome remodeling enzyme BRR2 recruits C9ORF78 to regulate alternative splicing.</title>
        <authorList>
            <person name="Bergfort A."/>
            <person name="Preussner M."/>
            <person name="Kuropka B."/>
            <person name="Ilik I.A."/>
            <person name="Hilal T."/>
            <person name="Weber G."/>
            <person name="Freund C."/>
            <person name="Aktas T."/>
            <person name="Heyd F."/>
            <person name="Wahl M.C."/>
        </authorList>
    </citation>
    <scope>STRUCTURE BY ELECTRON MICROSCOPY (3.30 ANGSTROMS) OF 199-376 IN COMPLEX WITH SNRNP200</scope>
</reference>
<reference key="13">
    <citation type="journal article" date="2006" name="Science">
        <title>The consensus coding sequences of human breast and colorectal cancers.</title>
        <authorList>
            <person name="Sjoeblom T."/>
            <person name="Jones S."/>
            <person name="Wood L.D."/>
            <person name="Parsons D.W."/>
            <person name="Lin J."/>
            <person name="Barber T.D."/>
            <person name="Mandelker D."/>
            <person name="Leary R.J."/>
            <person name="Ptak J."/>
            <person name="Silliman N."/>
            <person name="Szabo S."/>
            <person name="Buckhaults P."/>
            <person name="Farrell C."/>
            <person name="Meeh P."/>
            <person name="Markowitz S.D."/>
            <person name="Willis J."/>
            <person name="Dawson D."/>
            <person name="Willson J.K.V."/>
            <person name="Gazdar A.F."/>
            <person name="Hartigan J."/>
            <person name="Wu L."/>
            <person name="Liu C."/>
            <person name="Parmigiani G."/>
            <person name="Park B.H."/>
            <person name="Bachman K.E."/>
            <person name="Papadopoulos N."/>
            <person name="Vogelstein B."/>
            <person name="Kinzler K.W."/>
            <person name="Velculescu V.E."/>
        </authorList>
    </citation>
    <scope>VARIANT [LARGE SCALE ANALYSIS] ARG-113</scope>
</reference>
<reference key="14">
    <citation type="journal article" date="2023" name="Am. J. Hum. Genet.">
        <title>Bi-allelic loss-of-function variants in WBP4, encoding a spliceosome protein, result in a variable neurodevelopmental syndrome.</title>
        <authorList>
            <person name="Engal E."/>
            <person name="Oja K.T."/>
            <person name="Maroofian R."/>
            <person name="Geminder O."/>
            <person name="Le T.L."/>
            <person name="Marzin P."/>
            <person name="Guimier A."/>
            <person name="Mor E."/>
            <person name="Zvi N."/>
            <person name="Elefant N."/>
            <person name="Zaki M.S."/>
            <person name="Gleeson J.G."/>
            <person name="Muru K."/>
            <person name="Pajusalu S."/>
            <person name="Wojcik M.H."/>
            <person name="Pachat D."/>
            <person name="Elmaksoud M.A."/>
            <person name="Chan Jeong W."/>
            <person name="Lee H."/>
            <person name="Bauer P."/>
            <person name="Zifarelli G."/>
            <person name="Houlden H."/>
            <person name="Daana M."/>
            <person name="Elpeleg O."/>
            <person name="Amiel J."/>
            <person name="Lyonnet S."/>
            <person name="Gordon C.T."/>
            <person name="Harel T."/>
            <person name="Ounap K."/>
            <person name="Salton M."/>
            <person name="Mor-Shaked H."/>
        </authorList>
    </citation>
    <scope>INVOLVEMENT IN NEDHFDB</scope>
    <scope>VARIANT NEDHFDB 223-SER--GLU-309 DEL</scope>
</reference>
<name>WBP4_HUMAN</name>
<dbReference type="EMBL" id="AF071185">
    <property type="protein sequence ID" value="AAC34811.1"/>
    <property type="molecule type" value="mRNA"/>
</dbReference>
<dbReference type="EMBL" id="AK297536">
    <property type="protein sequence ID" value="BAH12608.1"/>
    <property type="molecule type" value="mRNA"/>
</dbReference>
<dbReference type="EMBL" id="AL157877">
    <property type="status" value="NOT_ANNOTATED_CDS"/>
    <property type="molecule type" value="Genomic_DNA"/>
</dbReference>
<dbReference type="EMBL" id="BC104879">
    <property type="protein sequence ID" value="AAI04880.1"/>
    <property type="molecule type" value="mRNA"/>
</dbReference>
<dbReference type="EMBL" id="BC108310">
    <property type="protein sequence ID" value="AAI08311.1"/>
    <property type="molecule type" value="mRNA"/>
</dbReference>
<dbReference type="CCDS" id="CCDS9375.1">
    <molecule id="O75554-1"/>
</dbReference>
<dbReference type="RefSeq" id="NP_009118.1">
    <molecule id="O75554-1"/>
    <property type="nucleotide sequence ID" value="NM_007187.5"/>
</dbReference>
<dbReference type="PDB" id="2DK1">
    <property type="method" value="NMR"/>
    <property type="chains" value="A=127-163"/>
</dbReference>
<dbReference type="PDB" id="2JXW">
    <property type="method" value="NMR"/>
    <property type="chains" value="A=122-196"/>
</dbReference>
<dbReference type="PDB" id="5O9Z">
    <property type="method" value="EM"/>
    <property type="resolution" value="4.50 A"/>
    <property type="chains" value="Q=1-376"/>
</dbReference>
<dbReference type="PDB" id="6AHD">
    <property type="method" value="EM"/>
    <property type="resolution" value="3.80 A"/>
    <property type="chains" value="X=1-376"/>
</dbReference>
<dbReference type="PDB" id="7OS1">
    <property type="method" value="EM"/>
    <property type="resolution" value="3.30 A"/>
    <property type="chains" value="F=199-376"/>
</dbReference>
<dbReference type="PDB" id="8H6K">
    <property type="method" value="EM"/>
    <property type="resolution" value="2.70 A"/>
    <property type="chains" value="4I=1-376"/>
</dbReference>
<dbReference type="PDB" id="8H6L">
    <property type="method" value="EM"/>
    <property type="resolution" value="2.60 A"/>
    <property type="chains" value="4I=1-376"/>
</dbReference>
<dbReference type="PDB" id="8Q7N">
    <property type="method" value="EM"/>
    <property type="resolution" value="3.10 A"/>
    <property type="chains" value="X=1-376"/>
</dbReference>
<dbReference type="PDB" id="8QO9">
    <property type="method" value="EM"/>
    <property type="resolution" value="5.29 A"/>
    <property type="chains" value="X=1-376"/>
</dbReference>
<dbReference type="PDB" id="8QPE">
    <property type="method" value="EM"/>
    <property type="resolution" value="3.10 A"/>
    <property type="chains" value="X=1-376"/>
</dbReference>
<dbReference type="PDB" id="8QZS">
    <property type="method" value="EM"/>
    <property type="resolution" value="4.10 A"/>
    <property type="chains" value="X=1-376"/>
</dbReference>
<dbReference type="PDBsum" id="2DK1"/>
<dbReference type="PDBsum" id="2JXW"/>
<dbReference type="PDBsum" id="5O9Z"/>
<dbReference type="PDBsum" id="6AHD"/>
<dbReference type="PDBsum" id="7OS1"/>
<dbReference type="PDBsum" id="8H6K"/>
<dbReference type="PDBsum" id="8H6L"/>
<dbReference type="PDBsum" id="8Q7N"/>
<dbReference type="PDBsum" id="8QO9"/>
<dbReference type="PDBsum" id="8QPE"/>
<dbReference type="PDBsum" id="8QZS"/>
<dbReference type="EMDB" id="EMD-13045"/>
<dbReference type="EMDB" id="EMD-18225"/>
<dbReference type="EMDB" id="EMD-18529"/>
<dbReference type="EMDB" id="EMD-18548"/>
<dbReference type="EMDB" id="EMD-18781"/>
<dbReference type="EMDB" id="EMD-34507"/>
<dbReference type="EMDB" id="EMD-34508"/>
<dbReference type="EMDB" id="EMD-3766"/>
<dbReference type="EMDB" id="EMD-9624"/>
<dbReference type="SMR" id="O75554"/>
<dbReference type="BioGRID" id="116363">
    <property type="interactions" value="126"/>
</dbReference>
<dbReference type="CORUM" id="O75554"/>
<dbReference type="FunCoup" id="O75554">
    <property type="interactions" value="3240"/>
</dbReference>
<dbReference type="IntAct" id="O75554">
    <property type="interactions" value="45"/>
</dbReference>
<dbReference type="MINT" id="O75554"/>
<dbReference type="STRING" id="9606.ENSP00000368801"/>
<dbReference type="GlyGen" id="O75554">
    <property type="glycosylation" value="2 sites, 1 O-linked glycan (2 sites)"/>
</dbReference>
<dbReference type="iPTMnet" id="O75554"/>
<dbReference type="MetOSite" id="O75554"/>
<dbReference type="PhosphoSitePlus" id="O75554"/>
<dbReference type="BioMuta" id="WBP4"/>
<dbReference type="jPOST" id="O75554"/>
<dbReference type="MassIVE" id="O75554"/>
<dbReference type="PaxDb" id="9606-ENSP00000368801"/>
<dbReference type="PeptideAtlas" id="O75554"/>
<dbReference type="ProteomicsDB" id="50083">
    <molecule id="O75554-1"/>
</dbReference>
<dbReference type="ProteomicsDB" id="6615"/>
<dbReference type="Pumba" id="O75554"/>
<dbReference type="TopDownProteomics" id="O75554-1">
    <molecule id="O75554-1"/>
</dbReference>
<dbReference type="Antibodypedia" id="42181">
    <property type="antibodies" value="53 antibodies from 13 providers"/>
</dbReference>
<dbReference type="DNASU" id="11193"/>
<dbReference type="Ensembl" id="ENST00000379487.5">
    <molecule id="O75554-1"/>
    <property type="protein sequence ID" value="ENSP00000368801.3"/>
    <property type="gene ID" value="ENSG00000120688.9"/>
</dbReference>
<dbReference type="GeneID" id="11193"/>
<dbReference type="KEGG" id="hsa:11193"/>
<dbReference type="MANE-Select" id="ENST00000379487.5">
    <property type="protein sequence ID" value="ENSP00000368801.3"/>
    <property type="RefSeq nucleotide sequence ID" value="NM_007187.5"/>
    <property type="RefSeq protein sequence ID" value="NP_009118.1"/>
</dbReference>
<dbReference type="UCSC" id="uc001uxt.4">
    <molecule id="O75554-1"/>
    <property type="organism name" value="human"/>
</dbReference>
<dbReference type="AGR" id="HGNC:12739"/>
<dbReference type="CTD" id="11193"/>
<dbReference type="DisGeNET" id="11193"/>
<dbReference type="GeneCards" id="WBP4"/>
<dbReference type="HGNC" id="HGNC:12739">
    <property type="gene designation" value="WBP4"/>
</dbReference>
<dbReference type="HPA" id="ENSG00000120688">
    <property type="expression patterns" value="Low tissue specificity"/>
</dbReference>
<dbReference type="MalaCards" id="WBP4"/>
<dbReference type="MIM" id="604981">
    <property type="type" value="gene"/>
</dbReference>
<dbReference type="MIM" id="620852">
    <property type="type" value="phenotype"/>
</dbReference>
<dbReference type="neXtProt" id="NX_O75554"/>
<dbReference type="OpenTargets" id="ENSG00000120688"/>
<dbReference type="PharmGKB" id="PA37350"/>
<dbReference type="VEuPathDB" id="HostDB:ENSG00000120688"/>
<dbReference type="eggNOG" id="KOG0150">
    <property type="taxonomic scope" value="Eukaryota"/>
</dbReference>
<dbReference type="GeneTree" id="ENSGT00390000013956"/>
<dbReference type="HOGENOM" id="CLU_050927_1_0_1"/>
<dbReference type="InParanoid" id="O75554"/>
<dbReference type="OMA" id="IDPMRLE"/>
<dbReference type="OrthoDB" id="191651at2759"/>
<dbReference type="PAN-GO" id="O75554">
    <property type="GO annotations" value="3 GO annotations based on evolutionary models"/>
</dbReference>
<dbReference type="PhylomeDB" id="O75554"/>
<dbReference type="TreeFam" id="TF316671"/>
<dbReference type="PathwayCommons" id="O75554"/>
<dbReference type="Reactome" id="R-HSA-72163">
    <property type="pathway name" value="mRNA Splicing - Major Pathway"/>
</dbReference>
<dbReference type="SignaLink" id="O75554"/>
<dbReference type="BioGRID-ORCS" id="11193">
    <property type="hits" value="91 hits in 1158 CRISPR screens"/>
</dbReference>
<dbReference type="CD-CODE" id="804901D1">
    <property type="entry name" value="Nuclear speckle"/>
</dbReference>
<dbReference type="ChiTaRS" id="WBP4">
    <property type="organism name" value="human"/>
</dbReference>
<dbReference type="EvolutionaryTrace" id="O75554"/>
<dbReference type="GeneWiki" id="WBP4"/>
<dbReference type="GenomeRNAi" id="11193"/>
<dbReference type="Pharos" id="O75554">
    <property type="development level" value="Tbio"/>
</dbReference>
<dbReference type="PRO" id="PR:O75554"/>
<dbReference type="Proteomes" id="UP000005640">
    <property type="component" value="Chromosome 13"/>
</dbReference>
<dbReference type="RNAct" id="O75554">
    <property type="molecule type" value="protein"/>
</dbReference>
<dbReference type="Bgee" id="ENSG00000120688">
    <property type="expression patterns" value="Expressed in oocyte and 216 other cell types or tissues"/>
</dbReference>
<dbReference type="GO" id="GO:0016607">
    <property type="term" value="C:nuclear speck"/>
    <property type="evidence" value="ECO:0000314"/>
    <property type="project" value="UniProtKB"/>
</dbReference>
<dbReference type="GO" id="GO:0005654">
    <property type="term" value="C:nucleoplasm"/>
    <property type="evidence" value="ECO:0000304"/>
    <property type="project" value="Reactome"/>
</dbReference>
<dbReference type="GO" id="GO:0005634">
    <property type="term" value="C:nucleus"/>
    <property type="evidence" value="ECO:0000314"/>
    <property type="project" value="UniProtKB"/>
</dbReference>
<dbReference type="GO" id="GO:0071011">
    <property type="term" value="C:precatalytic spliceosome"/>
    <property type="evidence" value="ECO:0000318"/>
    <property type="project" value="GO_Central"/>
</dbReference>
<dbReference type="GO" id="GO:0071005">
    <property type="term" value="C:U2-type precatalytic spliceosome"/>
    <property type="evidence" value="ECO:0000314"/>
    <property type="project" value="UniProtKB"/>
</dbReference>
<dbReference type="GO" id="GO:0070064">
    <property type="term" value="F:proline-rich region binding"/>
    <property type="evidence" value="ECO:0000353"/>
    <property type="project" value="UniProtKB"/>
</dbReference>
<dbReference type="GO" id="GO:0003723">
    <property type="term" value="F:RNA binding"/>
    <property type="evidence" value="ECO:0000318"/>
    <property type="project" value="GO_Central"/>
</dbReference>
<dbReference type="GO" id="GO:0008270">
    <property type="term" value="F:zinc ion binding"/>
    <property type="evidence" value="ECO:0007669"/>
    <property type="project" value="UniProtKB-KW"/>
</dbReference>
<dbReference type="GO" id="GO:0045292">
    <property type="term" value="P:mRNA cis splicing, via spliceosome"/>
    <property type="evidence" value="ECO:0000314"/>
    <property type="project" value="UniProtKB"/>
</dbReference>
<dbReference type="GO" id="GO:0000398">
    <property type="term" value="P:mRNA splicing, via spliceosome"/>
    <property type="evidence" value="ECO:0000314"/>
    <property type="project" value="UniProtKB"/>
</dbReference>
<dbReference type="GO" id="GO:0008380">
    <property type="term" value="P:RNA splicing"/>
    <property type="evidence" value="ECO:0000318"/>
    <property type="project" value="GO_Central"/>
</dbReference>
<dbReference type="CDD" id="cd00201">
    <property type="entry name" value="WW"/>
    <property type="match status" value="2"/>
</dbReference>
<dbReference type="DisProt" id="DP01531"/>
<dbReference type="FunFam" id="2.20.70.10:FF:000088">
    <property type="entry name" value="WW domain-binding protein 4"/>
    <property type="match status" value="1"/>
</dbReference>
<dbReference type="FunFam" id="3.30.160.60:FF:000767">
    <property type="entry name" value="WW domain-binding protein 4"/>
    <property type="match status" value="1"/>
</dbReference>
<dbReference type="Gene3D" id="2.20.70.10">
    <property type="match status" value="1"/>
</dbReference>
<dbReference type="Gene3D" id="3.30.160.60">
    <property type="entry name" value="Classic Zinc Finger"/>
    <property type="match status" value="1"/>
</dbReference>
<dbReference type="InterPro" id="IPR000690">
    <property type="entry name" value="Matrin/U1-C_Znf_C2H2"/>
</dbReference>
<dbReference type="InterPro" id="IPR003604">
    <property type="entry name" value="Matrin/U1-like-C_Znf_C2H2"/>
</dbReference>
<dbReference type="InterPro" id="IPR013085">
    <property type="entry name" value="U1-CZ_Znf_C2H2"/>
</dbReference>
<dbReference type="InterPro" id="IPR040023">
    <property type="entry name" value="WBP4"/>
</dbReference>
<dbReference type="InterPro" id="IPR001202">
    <property type="entry name" value="WW_dom"/>
</dbReference>
<dbReference type="InterPro" id="IPR036020">
    <property type="entry name" value="WW_dom_sf"/>
</dbReference>
<dbReference type="InterPro" id="IPR036236">
    <property type="entry name" value="Znf_C2H2_sf"/>
</dbReference>
<dbReference type="PANTHER" id="PTHR13173">
    <property type="entry name" value="WW DOMAIN BINDING PROTEIN 4"/>
    <property type="match status" value="1"/>
</dbReference>
<dbReference type="PANTHER" id="PTHR13173:SF10">
    <property type="entry name" value="WW DOMAIN-BINDING PROTEIN 4"/>
    <property type="match status" value="1"/>
</dbReference>
<dbReference type="Pfam" id="PF00397">
    <property type="entry name" value="WW"/>
    <property type="match status" value="2"/>
</dbReference>
<dbReference type="Pfam" id="PF06220">
    <property type="entry name" value="zf-U1"/>
    <property type="match status" value="1"/>
</dbReference>
<dbReference type="SMART" id="SM00456">
    <property type="entry name" value="WW"/>
    <property type="match status" value="2"/>
</dbReference>
<dbReference type="SMART" id="SM00451">
    <property type="entry name" value="ZnF_U1"/>
    <property type="match status" value="1"/>
</dbReference>
<dbReference type="SUPFAM" id="SSF57667">
    <property type="entry name" value="beta-beta-alpha zinc fingers"/>
    <property type="match status" value="1"/>
</dbReference>
<dbReference type="SUPFAM" id="SSF51045">
    <property type="entry name" value="WW domain"/>
    <property type="match status" value="2"/>
</dbReference>
<dbReference type="PROSITE" id="PS01159">
    <property type="entry name" value="WW_DOMAIN_1"/>
    <property type="match status" value="2"/>
</dbReference>
<dbReference type="PROSITE" id="PS50020">
    <property type="entry name" value="WW_DOMAIN_2"/>
    <property type="match status" value="2"/>
</dbReference>
<dbReference type="PROSITE" id="PS50171">
    <property type="entry name" value="ZF_MATRIN"/>
    <property type="match status" value="1"/>
</dbReference>
<gene>
    <name type="primary">WBP4</name>
    <name evidence="13" type="synonym">FBP21</name>
    <name type="synonym">FNBP21</name>
</gene>
<comment type="function">
    <text evidence="7 8 11">Involved in pre-mRNA splicing as a component of the spliceosome (PubMed:19592703, PubMed:28781166, PubMed:9724750). May play a role in cross-intron bridging of U1 and U2 snRNPs in the mammalian A complex (PubMed:9724750).</text>
</comment>
<comment type="subunit">
    <text evidence="2 7 8 11">Component of the spliceosome B complex (PubMed:28781166, PubMed:9724750). Associated with U2 snRNPs (PubMed:28781166, PubMed:9724750). Binds splicing factors SNRPB, SNRPC and SF1 (PubMed:9724750). Interacts via the WW domains with the Pro-rich domains of KHDRBS1/SAM68 (By similarity). Interacts via the WW domains with the Pro-rich domains of WBP11 (PubMed:19592703). Interacts with SNRNP200 (PubMed:35241646).</text>
</comment>
<comment type="interaction">
    <interactant intactId="EBI-7251981">
        <id>O75554</id>
    </interactant>
    <interactant intactId="EBI-466029">
        <id>P42858</id>
        <label>HTT</label>
    </interactant>
    <organismsDiffer>false</organismsDiffer>
    <experiments>3</experiments>
</comment>
<comment type="interaction">
    <interactant intactId="EBI-7251981">
        <id>O75554</id>
    </interactant>
    <interactant intactId="EBI-2512147">
        <id>Q8IUH3</id>
        <label>RBM45</label>
    </interactant>
    <organismsDiffer>false</organismsDiffer>
    <experiments>2</experiments>
</comment>
<comment type="interaction">
    <interactant intactId="EBI-7251981">
        <id>O75554</id>
    </interactant>
    <interactant intactId="EBI-1045395">
        <id>O75643</id>
        <label>SNRNP200</label>
    </interactant>
    <organismsDiffer>false</organismsDiffer>
    <experiments>11</experiments>
</comment>
<comment type="subcellular location">
    <subcellularLocation>
        <location evidence="8">Nucleus</location>
    </subcellularLocation>
    <subcellularLocation>
        <location evidence="3 7 11">Nucleus speckle</location>
    </subcellularLocation>
</comment>
<comment type="alternative products">
    <event type="alternative splicing"/>
    <isoform>
        <id>O75554-1</id>
        <name>1</name>
        <sequence type="displayed"/>
    </isoform>
    <isoform>
        <id>O75554-2</id>
        <name>2</name>
        <sequence type="described" ref="VSP_056413"/>
    </isoform>
</comment>
<comment type="domain">
    <text evidence="1">The WW domain recognizes the proline, glycine and methionine-rich (PGM) motif present in the splicing factors, as well as the Arg/Gly-rich-flanked Pro-rich domains found in several WW domain-binding proteins.</text>
</comment>
<comment type="disease" evidence="10">
    <disease id="DI-06914">
        <name>Neurodevelopmental disorder with hypotonia, feeding difficulties, facial dysmorphism, and brain abnormalities</name>
        <acronym>NEDHFDB</acronym>
        <description>An autosomal recessive, severe disorder apparent from infancy and characterized by global developmental delay, poor or absent speech, severe intellectual disability, hypotonia, and musculoskeletal and gastrointestinal abnormalities. Brain imaging shows aplasia or hypoplasia of corpus callosum in most patients.</description>
        <dbReference type="MIM" id="620852"/>
    </disease>
    <text>The disease is caused by variants affecting the gene represented in this entry.</text>
</comment>
<sequence length="376" mass="42507">MADYWKSQPKKFCDYCKCWIADNRPSVEFHERGKNHKENVAKRISEIKQKSLDKAKEEEKASKEFAAMEAAALKAYQEDLKRLGLESEILEPSITPVTSTIPPTSTSNQQKEKKEKKKRKKDPSKGRWVEGITSEGYHYYYDLISGASQWEKPEGFQGDLKKTAVKTVWVEGLSEDGFTYYYNTETGESRWEKPDDFIPHTSDLPSSKVNENSLGTLDESKSSDSHSDSDGEQEAEEGGVSTETEKPKIKFKEKNKNSDGGSDPETQKEKSIQKQNSLGSNEEKSKTLKKSNPYGEWQEIKQEVESHEEVDLELPSTENEYVSTSEADGGGEPKVVFKEKTVTSLGVMADGVAPVFKKRRTENGKSRNLRQRGDDQ</sequence>
<feature type="chain" id="PRO_0000076065" description="WW domain-binding protein 4">
    <location>
        <begin position="1"/>
        <end position="376"/>
    </location>
</feature>
<feature type="domain" description="WW 1" evidence="4">
    <location>
        <begin position="122"/>
        <end position="155"/>
    </location>
</feature>
<feature type="domain" description="WW 2" evidence="4">
    <location>
        <begin position="163"/>
        <end position="196"/>
    </location>
</feature>
<feature type="zinc finger region" description="Matrin-type" evidence="3">
    <location>
        <begin position="11"/>
        <end position="42"/>
    </location>
</feature>
<feature type="region of interest" description="Disordered" evidence="5">
    <location>
        <begin position="94"/>
        <end position="128"/>
    </location>
</feature>
<feature type="region of interest" description="Disordered" evidence="5">
    <location>
        <begin position="189"/>
        <end position="335"/>
    </location>
</feature>
<feature type="region of interest" description="Disordered" evidence="5">
    <location>
        <begin position="356"/>
        <end position="376"/>
    </location>
</feature>
<feature type="region of interest" description="Interaction with SNRNP200" evidence="9">
    <location>
        <begin position="357"/>
        <end position="375"/>
    </location>
</feature>
<feature type="compositionally biased region" description="Low complexity" evidence="5">
    <location>
        <begin position="94"/>
        <end position="107"/>
    </location>
</feature>
<feature type="compositionally biased region" description="Basic and acidic residues" evidence="5">
    <location>
        <begin position="189"/>
        <end position="198"/>
    </location>
</feature>
<feature type="compositionally biased region" description="Polar residues" evidence="5">
    <location>
        <begin position="203"/>
        <end position="215"/>
    </location>
</feature>
<feature type="compositionally biased region" description="Basic and acidic residues" evidence="5">
    <location>
        <begin position="218"/>
        <end position="229"/>
    </location>
</feature>
<feature type="compositionally biased region" description="Basic and acidic residues" evidence="5">
    <location>
        <begin position="243"/>
        <end position="257"/>
    </location>
</feature>
<feature type="compositionally biased region" description="Basic and acidic residues" evidence="5">
    <location>
        <begin position="298"/>
        <end position="309"/>
    </location>
</feature>
<feature type="compositionally biased region" description="Polar residues" evidence="5">
    <location>
        <begin position="316"/>
        <end position="326"/>
    </location>
</feature>
<feature type="compositionally biased region" description="Basic and acidic residues" evidence="5">
    <location>
        <begin position="361"/>
        <end position="376"/>
    </location>
</feature>
<feature type="modified residue" description="Phosphoserine" evidence="16 17">
    <location>
        <position position="220"/>
    </location>
</feature>
<feature type="modified residue" description="Phosphoserine" evidence="18">
    <location>
        <position position="227"/>
    </location>
</feature>
<feature type="modified residue" description="Phosphoserine" evidence="18">
    <location>
        <position position="229"/>
    </location>
</feature>
<feature type="modified residue" description="Phosphoserine" evidence="17 19">
    <location>
        <position position="262"/>
    </location>
</feature>
<feature type="splice variant" id="VSP_056413" description="In isoform 2." evidence="12">
    <location>
        <begin position="26"/>
        <end position="46"/>
    </location>
</feature>
<feature type="sequence variant" id="VAR_036352" description="In a breast cancer sample; somatic mutation." evidence="6">
    <original>K</original>
    <variation>R</variation>
    <location>
        <position position="113"/>
    </location>
</feature>
<feature type="sequence variant" id="VAR_089736" description="In NEDHFDB; likely pathogenic." evidence="10">
    <location>
        <begin position="223"/>
        <end position="309"/>
    </location>
</feature>
<feature type="mutagenesis site" description="Nearly abolishes activation of pre-mRNA splicing. Abolishes interaction with WBP11." evidence="7">
    <original>W</original>
    <variation>A</variation>
    <location>
        <position position="150"/>
    </location>
</feature>
<feature type="mutagenesis site" description="Nearly abolishes activation of pre-mRNA splicing. Abolishes interaction with WBP11." evidence="7">
    <original>W</original>
    <variation>A</variation>
    <location>
        <position position="191"/>
    </location>
</feature>
<feature type="strand" evidence="22">
    <location>
        <begin position="10"/>
        <end position="13"/>
    </location>
</feature>
<feature type="turn" evidence="22">
    <location>
        <begin position="14"/>
        <end position="17"/>
    </location>
</feature>
<feature type="strand" evidence="22">
    <location>
        <begin position="18"/>
        <end position="23"/>
    </location>
</feature>
<feature type="helix" evidence="22">
    <location>
        <begin position="24"/>
        <end position="31"/>
    </location>
</feature>
<feature type="helix" evidence="22">
    <location>
        <begin position="34"/>
        <end position="80"/>
    </location>
</feature>
<feature type="strand" evidence="20">
    <location>
        <begin position="128"/>
        <end position="130"/>
    </location>
</feature>
<feature type="turn" evidence="21">
    <location>
        <begin position="134"/>
        <end position="136"/>
    </location>
</feature>
<feature type="strand" evidence="20">
    <location>
        <begin position="140"/>
        <end position="145"/>
    </location>
</feature>
<feature type="strand" evidence="20">
    <location>
        <begin position="148"/>
        <end position="151"/>
    </location>
</feature>
<feature type="strand" evidence="21">
    <location>
        <begin position="161"/>
        <end position="164"/>
    </location>
</feature>
<feature type="strand" evidence="21">
    <location>
        <begin position="168"/>
        <end position="174"/>
    </location>
</feature>
<feature type="turn" evidence="21">
    <location>
        <begin position="175"/>
        <end position="177"/>
    </location>
</feature>
<feature type="strand" evidence="21">
    <location>
        <begin position="178"/>
        <end position="183"/>
    </location>
</feature>
<feature type="turn" evidence="21">
    <location>
        <begin position="184"/>
        <end position="187"/>
    </location>
</feature>
<feature type="strand" evidence="21">
    <location>
        <begin position="188"/>
        <end position="192"/>
    </location>
</feature>
<accession>O75554</accession>
<accession>B7Z4M2</accession>
<accession>Q32P29</accession>
<organism>
    <name type="scientific">Homo sapiens</name>
    <name type="common">Human</name>
    <dbReference type="NCBI Taxonomy" id="9606"/>
    <lineage>
        <taxon>Eukaryota</taxon>
        <taxon>Metazoa</taxon>
        <taxon>Chordata</taxon>
        <taxon>Craniata</taxon>
        <taxon>Vertebrata</taxon>
        <taxon>Euteleostomi</taxon>
        <taxon>Mammalia</taxon>
        <taxon>Eutheria</taxon>
        <taxon>Euarchontoglires</taxon>
        <taxon>Primates</taxon>
        <taxon>Haplorrhini</taxon>
        <taxon>Catarrhini</taxon>
        <taxon>Hominidae</taxon>
        <taxon>Homo</taxon>
    </lineage>
</organism>
<keyword id="KW-0002">3D-structure</keyword>
<keyword id="KW-0025">Alternative splicing</keyword>
<keyword id="KW-0225">Disease variant</keyword>
<keyword id="KW-0991">Intellectual disability</keyword>
<keyword id="KW-0479">Metal-binding</keyword>
<keyword id="KW-0507">mRNA processing</keyword>
<keyword id="KW-0508">mRNA splicing</keyword>
<keyword id="KW-0539">Nucleus</keyword>
<keyword id="KW-0597">Phosphoprotein</keyword>
<keyword id="KW-1267">Proteomics identification</keyword>
<keyword id="KW-1185">Reference proteome</keyword>
<keyword id="KW-0677">Repeat</keyword>
<keyword id="KW-0747">Spliceosome</keyword>
<keyword id="KW-0862">Zinc</keyword>
<keyword id="KW-0863">Zinc-finger</keyword>
<protein>
    <recommendedName>
        <fullName>WW domain-binding protein 4</fullName>
        <shortName>WBP-4</shortName>
    </recommendedName>
    <alternativeName>
        <fullName evidence="13">Formin-binding protein 21</fullName>
    </alternativeName>
    <alternativeName>
        <fullName>WW domain-containing-binding protein 4</fullName>
    </alternativeName>
</protein>
<evidence type="ECO:0000250" key="1"/>
<evidence type="ECO:0000250" key="2">
    <source>
        <dbReference type="UniProtKB" id="Q61048"/>
    </source>
</evidence>
<evidence type="ECO:0000255" key="3">
    <source>
        <dbReference type="PROSITE-ProRule" id="PRU00130"/>
    </source>
</evidence>
<evidence type="ECO:0000255" key="4">
    <source>
        <dbReference type="PROSITE-ProRule" id="PRU00224"/>
    </source>
</evidence>
<evidence type="ECO:0000256" key="5">
    <source>
        <dbReference type="SAM" id="MobiDB-lite"/>
    </source>
</evidence>
<evidence type="ECO:0000269" key="6">
    <source>
    </source>
</evidence>
<evidence type="ECO:0000269" key="7">
    <source>
    </source>
</evidence>
<evidence type="ECO:0000269" key="8">
    <source>
    </source>
</evidence>
<evidence type="ECO:0000269" key="9">
    <source>
    </source>
</evidence>
<evidence type="ECO:0000269" key="10">
    <source>
    </source>
</evidence>
<evidence type="ECO:0000269" key="11">
    <source>
    </source>
</evidence>
<evidence type="ECO:0000303" key="12">
    <source>
    </source>
</evidence>
<evidence type="ECO:0000303" key="13">
    <source>
    </source>
</evidence>
<evidence type="ECO:0007744" key="14">
    <source>
        <dbReference type="PDB" id="5O9Z"/>
    </source>
</evidence>
<evidence type="ECO:0007744" key="15">
    <source>
        <dbReference type="PDB" id="7OS1"/>
    </source>
</evidence>
<evidence type="ECO:0007744" key="16">
    <source>
    </source>
</evidence>
<evidence type="ECO:0007744" key="17">
    <source>
    </source>
</evidence>
<evidence type="ECO:0007744" key="18">
    <source>
    </source>
</evidence>
<evidence type="ECO:0007744" key="19">
    <source>
    </source>
</evidence>
<evidence type="ECO:0007829" key="20">
    <source>
        <dbReference type="PDB" id="2DK1"/>
    </source>
</evidence>
<evidence type="ECO:0007829" key="21">
    <source>
        <dbReference type="PDB" id="2JXW"/>
    </source>
</evidence>
<evidence type="ECO:0007829" key="22">
    <source>
        <dbReference type="PDB" id="8Q7N"/>
    </source>
</evidence>
<proteinExistence type="evidence at protein level"/>